<name>SRY_PHOLR</name>
<reference key="1">
    <citation type="submission" date="2003-09" db="EMBL/GenBank/DDBJ databases">
        <title>A phylogeny of the pinnipeds from mitochondrial and single copy nuclear gene sequences.</title>
        <authorList>
            <person name="Kinnear M.W."/>
            <person name="Walker G."/>
            <person name="Amos W."/>
        </authorList>
    </citation>
    <scope>NUCLEOTIDE SEQUENCE [GENOMIC DNA]</scope>
</reference>
<protein>
    <recommendedName>
        <fullName>Sex-determining region Y protein</fullName>
    </recommendedName>
    <alternativeName>
        <fullName>Testis-determining factor</fullName>
    </alternativeName>
</protein>
<proteinExistence type="inferred from homology"/>
<organism>
    <name type="scientific">Phoca largha</name>
    <name type="common">Spotted seal</name>
    <dbReference type="NCBI Taxonomy" id="39090"/>
    <lineage>
        <taxon>Eukaryota</taxon>
        <taxon>Metazoa</taxon>
        <taxon>Chordata</taxon>
        <taxon>Craniata</taxon>
        <taxon>Vertebrata</taxon>
        <taxon>Euteleostomi</taxon>
        <taxon>Mammalia</taxon>
        <taxon>Eutheria</taxon>
        <taxon>Laurasiatheria</taxon>
        <taxon>Carnivora</taxon>
        <taxon>Caniformia</taxon>
        <taxon>Pinnipedia</taxon>
        <taxon>Phocidae</taxon>
        <taxon>Phocinae</taxon>
        <taxon>Phoca</taxon>
    </lineage>
</organism>
<sequence>MFGVLNSNDHRAAVQQRNIPAFGRTSFEPWTDNPTSNYRCETGGNGRDSGQNRVRRPMNAFMVWSRDQRRKVALENPQMQNSEISKQLGYQWKMLTEAEKWPFFEEAQRLQAMHREKYPDYKYRPRRKALPQKSDKLLPAASSSMLCRQVLVDEKWYPFTYRDSCSRAAHSRMEDQLSSSQPVNIANSLLQQEHHYRSTSLRDSPETLAAHLSADPPFYPKEQLGLSDAYFP</sequence>
<feature type="chain" id="PRO_0000048700" description="Sex-determining region Y protein">
    <location>
        <begin position="1"/>
        <end position="232"/>
    </location>
</feature>
<feature type="DNA-binding region" description="HMG box" evidence="3">
    <location>
        <begin position="54"/>
        <end position="122"/>
    </location>
</feature>
<feature type="region of interest" description="Disordered" evidence="4">
    <location>
        <begin position="24"/>
        <end position="53"/>
    </location>
</feature>
<comment type="function">
    <text evidence="1 2">Transcriptional regulator that controls a genetic switch in male development. It is necessary and sufficient for initiating male sex determination by directing the development of supporting cell precursors (pre-Sertoli cells) as Sertoli rather than granulosa cells. Involved in different aspects of gene regulation including promoter activation or repression. Binds to the DNA consensus sequence 5'-[AT]AACAA[AT]-3'. SRY HMG box recognizes DNA by partial intercalation in the minor groove and promotes DNA bending. Also involved in pre-mRNA splicing (By similarity). In male adult brain involved in the maintenance of motor functions of dopaminergic neurons (By similarity).</text>
</comment>
<comment type="subunit">
    <text evidence="2">Interacts with CALM, EP300, HDAC3, KPNB1, ZNF208 isoform KRAB-O, PARP1, SLC9A3R2 and WT1. The interaction with EP300 modulates its DNA-binding activity. The interaction with KPNB1 is sensitive to dissociation by Ran in the GTP-bound form. Interaction with PARP1 impaired its DNA-binding activity.</text>
</comment>
<comment type="subcellular location">
    <subcellularLocation>
        <location evidence="2">Nucleus speckle</location>
    </subcellularLocation>
    <subcellularLocation>
        <location evidence="2">Cytoplasm</location>
    </subcellularLocation>
    <subcellularLocation>
        <location evidence="2">Nucleus</location>
    </subcellularLocation>
</comment>
<comment type="similarity">
    <text evidence="5">Belongs to the SRY family.</text>
</comment>
<comment type="online information" name="Protein Spotlight">
    <link uri="https://www.proteinspotlight.org/back_issues/080"/>
    <text>The tenuous nature of sex - Issue 80 of March 2007</text>
</comment>
<dbReference type="EMBL" id="AY424664">
    <property type="protein sequence ID" value="AAR10375.1"/>
    <property type="molecule type" value="Genomic_DNA"/>
</dbReference>
<dbReference type="SMR" id="Q6TC31"/>
<dbReference type="GO" id="GO:0005737">
    <property type="term" value="C:cytoplasm"/>
    <property type="evidence" value="ECO:0007669"/>
    <property type="project" value="UniProtKB-SubCell"/>
</dbReference>
<dbReference type="GO" id="GO:0016607">
    <property type="term" value="C:nuclear speck"/>
    <property type="evidence" value="ECO:0007669"/>
    <property type="project" value="UniProtKB-SubCell"/>
</dbReference>
<dbReference type="GO" id="GO:0005634">
    <property type="term" value="C:nucleus"/>
    <property type="evidence" value="ECO:0000250"/>
    <property type="project" value="UniProtKB"/>
</dbReference>
<dbReference type="GO" id="GO:0005516">
    <property type="term" value="F:calmodulin binding"/>
    <property type="evidence" value="ECO:0007669"/>
    <property type="project" value="UniProtKB-KW"/>
</dbReference>
<dbReference type="GO" id="GO:0001228">
    <property type="term" value="F:DNA-binding transcription activator activity, RNA polymerase II-specific"/>
    <property type="evidence" value="ECO:0007669"/>
    <property type="project" value="TreeGrafter"/>
</dbReference>
<dbReference type="GO" id="GO:0000978">
    <property type="term" value="F:RNA polymerase II cis-regulatory region sequence-specific DNA binding"/>
    <property type="evidence" value="ECO:0007669"/>
    <property type="project" value="TreeGrafter"/>
</dbReference>
<dbReference type="GO" id="GO:0030154">
    <property type="term" value="P:cell differentiation"/>
    <property type="evidence" value="ECO:0007669"/>
    <property type="project" value="UniProtKB-KW"/>
</dbReference>
<dbReference type="GO" id="GO:0030238">
    <property type="term" value="P:male sex determination"/>
    <property type="evidence" value="ECO:0007669"/>
    <property type="project" value="InterPro"/>
</dbReference>
<dbReference type="GO" id="GO:0007548">
    <property type="term" value="P:sex differentiation"/>
    <property type="evidence" value="ECO:0007669"/>
    <property type="project" value="UniProtKB-KW"/>
</dbReference>
<dbReference type="CDD" id="cd22034">
    <property type="entry name" value="HMG-box_SoxA_SRY"/>
    <property type="match status" value="1"/>
</dbReference>
<dbReference type="FunFam" id="1.10.30.10:FF:000002">
    <property type="entry name" value="transcription factor Sox-2"/>
    <property type="match status" value="1"/>
</dbReference>
<dbReference type="Gene3D" id="1.10.30.10">
    <property type="entry name" value="High mobility group box domain"/>
    <property type="match status" value="1"/>
</dbReference>
<dbReference type="InterPro" id="IPR009071">
    <property type="entry name" value="HMG_box_dom"/>
</dbReference>
<dbReference type="InterPro" id="IPR036910">
    <property type="entry name" value="HMG_box_dom_sf"/>
</dbReference>
<dbReference type="InterPro" id="IPR017253">
    <property type="entry name" value="SRY"/>
</dbReference>
<dbReference type="InterPro" id="IPR050140">
    <property type="entry name" value="SRY-related_HMG-box_TF-like"/>
</dbReference>
<dbReference type="PANTHER" id="PTHR10270:SF161">
    <property type="entry name" value="SEX-DETERMINING REGION Y PROTEIN"/>
    <property type="match status" value="1"/>
</dbReference>
<dbReference type="PANTHER" id="PTHR10270">
    <property type="entry name" value="SOX TRANSCRIPTION FACTOR"/>
    <property type="match status" value="1"/>
</dbReference>
<dbReference type="Pfam" id="PF00505">
    <property type="entry name" value="HMG_box"/>
    <property type="match status" value="1"/>
</dbReference>
<dbReference type="PIRSF" id="PIRSF037653">
    <property type="entry name" value="SRY"/>
    <property type="match status" value="1"/>
</dbReference>
<dbReference type="SMART" id="SM00398">
    <property type="entry name" value="HMG"/>
    <property type="match status" value="1"/>
</dbReference>
<dbReference type="SUPFAM" id="SSF47095">
    <property type="entry name" value="HMG-box"/>
    <property type="match status" value="1"/>
</dbReference>
<dbReference type="PROSITE" id="PS50118">
    <property type="entry name" value="HMG_BOX_2"/>
    <property type="match status" value="1"/>
</dbReference>
<evidence type="ECO:0000250" key="1">
    <source>
        <dbReference type="UniProtKB" id="P36394"/>
    </source>
</evidence>
<evidence type="ECO:0000250" key="2">
    <source>
        <dbReference type="UniProtKB" id="Q05066"/>
    </source>
</evidence>
<evidence type="ECO:0000255" key="3">
    <source>
        <dbReference type="PROSITE-ProRule" id="PRU00267"/>
    </source>
</evidence>
<evidence type="ECO:0000256" key="4">
    <source>
        <dbReference type="SAM" id="MobiDB-lite"/>
    </source>
</evidence>
<evidence type="ECO:0000305" key="5"/>
<accession>Q6TC31</accession>
<gene>
    <name type="primary">SRY</name>
    <name type="synonym">TDF</name>
</gene>
<keyword id="KW-0010">Activator</keyword>
<keyword id="KW-0112">Calmodulin-binding</keyword>
<keyword id="KW-0963">Cytoplasm</keyword>
<keyword id="KW-0221">Differentiation</keyword>
<keyword id="KW-0238">DNA-binding</keyword>
<keyword id="KW-0539">Nucleus</keyword>
<keyword id="KW-0726">Sexual differentiation</keyword>
<keyword id="KW-0804">Transcription</keyword>
<keyword id="KW-0805">Transcription regulation</keyword>